<proteinExistence type="evidence at transcript level"/>
<dbReference type="EMBL" id="AC006569">
    <property type="status" value="NOT_ANNOTATED_CDS"/>
    <property type="molecule type" value="Genomic_DNA"/>
</dbReference>
<dbReference type="EMBL" id="CP002685">
    <property type="protein sequence ID" value="AEC06981.1"/>
    <property type="molecule type" value="Genomic_DNA"/>
</dbReference>
<dbReference type="RefSeq" id="NP_001031377.1">
    <property type="nucleotide sequence ID" value="NM_001036300.2"/>
</dbReference>
<dbReference type="SMR" id="P82774"/>
<dbReference type="BioGRID" id="528285">
    <property type="interactions" value="1"/>
</dbReference>
<dbReference type="PaxDb" id="3702-AT2G20208.1"/>
<dbReference type="EnsemblPlants" id="AT2G20208.1">
    <property type="protein sequence ID" value="AT2G20208.1"/>
    <property type="gene ID" value="AT2G20208"/>
</dbReference>
<dbReference type="GeneID" id="3767924"/>
<dbReference type="Gramene" id="AT2G20208.1">
    <property type="protein sequence ID" value="AT2G20208.1"/>
    <property type="gene ID" value="AT2G20208"/>
</dbReference>
<dbReference type="KEGG" id="ath:AT2G20208"/>
<dbReference type="Araport" id="AT2G20208"/>
<dbReference type="TAIR" id="AT2G20208">
    <property type="gene designation" value="LCR60"/>
</dbReference>
<dbReference type="HOGENOM" id="CLU_196273_0_0_1"/>
<dbReference type="InParanoid" id="P82774"/>
<dbReference type="OMA" id="QNMGCTA"/>
<dbReference type="PhylomeDB" id="P82774"/>
<dbReference type="PRO" id="PR:P82774"/>
<dbReference type="Proteomes" id="UP000006548">
    <property type="component" value="Chromosome 2"/>
</dbReference>
<dbReference type="ExpressionAtlas" id="P82774">
    <property type="expression patterns" value="baseline"/>
</dbReference>
<dbReference type="GO" id="GO:0005576">
    <property type="term" value="C:extracellular region"/>
    <property type="evidence" value="ECO:0007669"/>
    <property type="project" value="UniProtKB-SubCell"/>
</dbReference>
<dbReference type="GO" id="GO:0050832">
    <property type="term" value="P:defense response to fungus"/>
    <property type="evidence" value="ECO:0007669"/>
    <property type="project" value="UniProtKB-KW"/>
</dbReference>
<dbReference type="GO" id="GO:0031640">
    <property type="term" value="P:killing of cells of another organism"/>
    <property type="evidence" value="ECO:0007669"/>
    <property type="project" value="UniProtKB-KW"/>
</dbReference>
<dbReference type="InterPro" id="IPR010851">
    <property type="entry name" value="DEFL"/>
</dbReference>
<dbReference type="InterPro" id="IPR039641">
    <property type="entry name" value="LCR"/>
</dbReference>
<dbReference type="PANTHER" id="PTHR36788:SF5">
    <property type="entry name" value="DEFENSIN-LIKE PROTEIN 172"/>
    <property type="match status" value="1"/>
</dbReference>
<dbReference type="PANTHER" id="PTHR36788">
    <property type="entry name" value="DEFENSIN-LIKE PROTEIN 183"/>
    <property type="match status" value="1"/>
</dbReference>
<dbReference type="Pfam" id="PF25052">
    <property type="entry name" value="AtDEF-like"/>
    <property type="match status" value="1"/>
</dbReference>
<feature type="signal peptide" evidence="2">
    <location>
        <begin position="1"/>
        <end position="23"/>
    </location>
</feature>
<feature type="chain" id="PRO_0000017298" description="Defensin-like protein 172">
    <location>
        <begin position="24"/>
        <end position="84"/>
    </location>
</feature>
<feature type="disulfide bond" evidence="1">
    <location>
        <begin position="27"/>
        <end position="74"/>
    </location>
</feature>
<feature type="disulfide bond" evidence="1">
    <location>
        <begin position="34"/>
        <end position="56"/>
    </location>
</feature>
<feature type="disulfide bond" evidence="1">
    <location>
        <begin position="40"/>
        <end position="68"/>
    </location>
</feature>
<feature type="disulfide bond" evidence="1">
    <location>
        <begin position="44"/>
        <end position="70"/>
    </location>
</feature>
<reference evidence="4" key="1">
    <citation type="journal article" date="1999" name="Nature">
        <title>Sequence and analysis of chromosome 2 of the plant Arabidopsis thaliana.</title>
        <authorList>
            <person name="Lin X."/>
            <person name="Kaul S."/>
            <person name="Rounsley S.D."/>
            <person name="Shea T.P."/>
            <person name="Benito M.-I."/>
            <person name="Town C.D."/>
            <person name="Fujii C.Y."/>
            <person name="Mason T.M."/>
            <person name="Bowman C.L."/>
            <person name="Barnstead M.E."/>
            <person name="Feldblyum T.V."/>
            <person name="Buell C.R."/>
            <person name="Ketchum K.A."/>
            <person name="Lee J.J."/>
            <person name="Ronning C.M."/>
            <person name="Koo H.L."/>
            <person name="Moffat K.S."/>
            <person name="Cronin L.A."/>
            <person name="Shen M."/>
            <person name="Pai G."/>
            <person name="Van Aken S."/>
            <person name="Umayam L."/>
            <person name="Tallon L.J."/>
            <person name="Gill J.E."/>
            <person name="Adams M.D."/>
            <person name="Carrera A.J."/>
            <person name="Creasy T.H."/>
            <person name="Goodman H.M."/>
            <person name="Somerville C.R."/>
            <person name="Copenhaver G.P."/>
            <person name="Preuss D."/>
            <person name="Nierman W.C."/>
            <person name="White O."/>
            <person name="Eisen J.A."/>
            <person name="Salzberg S.L."/>
            <person name="Fraser C.M."/>
            <person name="Venter J.C."/>
        </authorList>
    </citation>
    <scope>NUCLEOTIDE SEQUENCE [LARGE SCALE GENOMIC DNA]</scope>
    <source>
        <strain evidence="3">cv. Columbia</strain>
    </source>
</reference>
<reference key="2">
    <citation type="journal article" date="2017" name="Plant J.">
        <title>Araport11: a complete reannotation of the Arabidopsis thaliana reference genome.</title>
        <authorList>
            <person name="Cheng C.Y."/>
            <person name="Krishnakumar V."/>
            <person name="Chan A.P."/>
            <person name="Thibaud-Nissen F."/>
            <person name="Schobel S."/>
            <person name="Town C.D."/>
        </authorList>
    </citation>
    <scope>GENOME REANNOTATION</scope>
    <source>
        <strain>cv. Columbia</strain>
    </source>
</reference>
<reference evidence="4" key="3">
    <citation type="journal article" date="2001" name="Plant Mol. Biol.">
        <title>Two large Arabidopsis thaliana gene families are homologous to the Brassica gene superfamily that encodes pollen coat proteins and the male component of the self-incompatibility response.</title>
        <authorList>
            <person name="Vanoosthuyse V."/>
            <person name="Miege C."/>
            <person name="Dumas C."/>
            <person name="Cock J.M."/>
        </authorList>
    </citation>
    <scope>IDENTIFICATION</scope>
</reference>
<reference key="4">
    <citation type="journal article" date="2005" name="Plant Physiol.">
        <title>Genome organization of more than 300 defensin-like genes in Arabidopsis.</title>
        <authorList>
            <person name="Silverstein K.A.T."/>
            <person name="Graham M.A."/>
            <person name="Paape T.D."/>
            <person name="VandenBosch K.A."/>
        </authorList>
    </citation>
    <scope>GENE FAMILY</scope>
</reference>
<accession>P82774</accession>
<name>DF172_ARATH</name>
<comment type="subcellular location">
    <subcellularLocation>
        <location evidence="1">Secreted</location>
    </subcellularLocation>
</comment>
<comment type="similarity">
    <text evidence="4">Belongs to the DEFL family.</text>
</comment>
<keyword id="KW-0929">Antimicrobial</keyword>
<keyword id="KW-1015">Disulfide bond</keyword>
<keyword id="KW-0295">Fungicide</keyword>
<keyword id="KW-0611">Plant defense</keyword>
<keyword id="KW-1185">Reference proteome</keyword>
<keyword id="KW-0964">Secreted</keyword>
<keyword id="KW-0732">Signal</keyword>
<evidence type="ECO:0000250" key="1"/>
<evidence type="ECO:0000255" key="2"/>
<evidence type="ECO:0000269" key="3">
    <source>
    </source>
</evidence>
<evidence type="ECO:0000305" key="4"/>
<sequence length="84" mass="8914">MAKASSTLVLSIIFLVMFALVEQNMGCTATMGPCEKDKSCSATCRATFGDRANGFCDYSTSTSPGGECTCVYHCPPVVPHESHL</sequence>
<organism evidence="4">
    <name type="scientific">Arabidopsis thaliana</name>
    <name type="common">Mouse-ear cress</name>
    <dbReference type="NCBI Taxonomy" id="3702"/>
    <lineage>
        <taxon>Eukaryota</taxon>
        <taxon>Viridiplantae</taxon>
        <taxon>Streptophyta</taxon>
        <taxon>Embryophyta</taxon>
        <taxon>Tracheophyta</taxon>
        <taxon>Spermatophyta</taxon>
        <taxon>Magnoliopsida</taxon>
        <taxon>eudicotyledons</taxon>
        <taxon>Gunneridae</taxon>
        <taxon>Pentapetalae</taxon>
        <taxon>rosids</taxon>
        <taxon>malvids</taxon>
        <taxon>Brassicales</taxon>
        <taxon>Brassicaceae</taxon>
        <taxon>Camelineae</taxon>
        <taxon>Arabidopsis</taxon>
    </lineage>
</organism>
<gene>
    <name type="primary">LCR60</name>
    <name type="ordered locus">At2g20208</name>
    <name type="ORF">F11A3</name>
</gene>
<protein>
    <recommendedName>
        <fullName>Defensin-like protein 172</fullName>
    </recommendedName>
    <alternativeName>
        <fullName>Low-molecular-weight cysteine-rich protein 60</fullName>
        <shortName>Protein LCR60</shortName>
    </alternativeName>
</protein>